<comment type="function">
    <text evidence="1">Transferase that catalyzes the transfer of sulfur from thiosulfate to thiophilic acceptors such as cyanide or dithiols. May function in a CysM-independent thiosulfate assimilation pathway by catalyzing the conversion of thiosulfate to sulfite, which can then be used for L-cysteine biosynthesis.</text>
</comment>
<comment type="catalytic activity">
    <reaction evidence="1">
        <text>thiosulfate + hydrogen cyanide = thiocyanate + sulfite + 2 H(+)</text>
        <dbReference type="Rhea" id="RHEA:16881"/>
        <dbReference type="ChEBI" id="CHEBI:15378"/>
        <dbReference type="ChEBI" id="CHEBI:17359"/>
        <dbReference type="ChEBI" id="CHEBI:18022"/>
        <dbReference type="ChEBI" id="CHEBI:18407"/>
        <dbReference type="ChEBI" id="CHEBI:33542"/>
        <dbReference type="EC" id="2.8.1.1"/>
    </reaction>
</comment>
<comment type="catalytic activity">
    <reaction evidence="1">
        <text>thiosulfate + [thioredoxin]-dithiol = [thioredoxin]-disulfide + hydrogen sulfide + sulfite + 2 H(+)</text>
        <dbReference type="Rhea" id="RHEA:83859"/>
        <dbReference type="Rhea" id="RHEA-COMP:10698"/>
        <dbReference type="Rhea" id="RHEA-COMP:10700"/>
        <dbReference type="ChEBI" id="CHEBI:15378"/>
        <dbReference type="ChEBI" id="CHEBI:17359"/>
        <dbReference type="ChEBI" id="CHEBI:29919"/>
        <dbReference type="ChEBI" id="CHEBI:29950"/>
        <dbReference type="ChEBI" id="CHEBI:33542"/>
        <dbReference type="ChEBI" id="CHEBI:50058"/>
    </reaction>
</comment>
<comment type="subcellular location">
    <subcellularLocation>
        <location evidence="1">Cytoplasm</location>
    </subcellularLocation>
</comment>
<comment type="similarity">
    <text evidence="1">Belongs to the GlpE family.</text>
</comment>
<feature type="chain" id="PRO_0000200569" description="Thiosulfate sulfurtransferase GlpE">
    <location>
        <begin position="1"/>
        <end position="106"/>
    </location>
</feature>
<feature type="domain" description="Rhodanese" evidence="1">
    <location>
        <begin position="17"/>
        <end position="105"/>
    </location>
</feature>
<feature type="active site" description="Cysteine persulfide intermediate" evidence="1">
    <location>
        <position position="65"/>
    </location>
</feature>
<accession>Q8DD53</accession>
<organism>
    <name type="scientific">Vibrio vulnificus (strain CMCP6)</name>
    <dbReference type="NCBI Taxonomy" id="216895"/>
    <lineage>
        <taxon>Bacteria</taxon>
        <taxon>Pseudomonadati</taxon>
        <taxon>Pseudomonadota</taxon>
        <taxon>Gammaproteobacteria</taxon>
        <taxon>Vibrionales</taxon>
        <taxon>Vibrionaceae</taxon>
        <taxon>Vibrio</taxon>
    </lineage>
</organism>
<dbReference type="EC" id="2.8.1.1" evidence="1"/>
<dbReference type="EMBL" id="AE016795">
    <property type="protein sequence ID" value="AAO09631.1"/>
    <property type="molecule type" value="Genomic_DNA"/>
</dbReference>
<dbReference type="RefSeq" id="WP_011079170.1">
    <property type="nucleotide sequence ID" value="NC_004459.3"/>
</dbReference>
<dbReference type="SMR" id="Q8DD53"/>
<dbReference type="GeneID" id="93895434"/>
<dbReference type="KEGG" id="vvu:VV1_1160"/>
<dbReference type="HOGENOM" id="CLU_089574_14_0_6"/>
<dbReference type="Proteomes" id="UP000002275">
    <property type="component" value="Chromosome 1"/>
</dbReference>
<dbReference type="GO" id="GO:0005737">
    <property type="term" value="C:cytoplasm"/>
    <property type="evidence" value="ECO:0007669"/>
    <property type="project" value="UniProtKB-SubCell"/>
</dbReference>
<dbReference type="GO" id="GO:0004792">
    <property type="term" value="F:thiosulfate-cyanide sulfurtransferase activity"/>
    <property type="evidence" value="ECO:0007669"/>
    <property type="project" value="UniProtKB-UniRule"/>
</dbReference>
<dbReference type="GO" id="GO:0006071">
    <property type="term" value="P:glycerol metabolic process"/>
    <property type="evidence" value="ECO:0007669"/>
    <property type="project" value="UniProtKB-UniRule"/>
</dbReference>
<dbReference type="CDD" id="cd01444">
    <property type="entry name" value="GlpE_ST"/>
    <property type="match status" value="1"/>
</dbReference>
<dbReference type="Gene3D" id="3.40.250.10">
    <property type="entry name" value="Rhodanese-like domain"/>
    <property type="match status" value="1"/>
</dbReference>
<dbReference type="HAMAP" id="MF_01009">
    <property type="entry name" value="Thiosulf_sulfurtr"/>
    <property type="match status" value="1"/>
</dbReference>
<dbReference type="InterPro" id="IPR050229">
    <property type="entry name" value="GlpE_sulfurtransferase"/>
</dbReference>
<dbReference type="InterPro" id="IPR001763">
    <property type="entry name" value="Rhodanese-like_dom"/>
</dbReference>
<dbReference type="InterPro" id="IPR036873">
    <property type="entry name" value="Rhodanese-like_dom_sf"/>
</dbReference>
<dbReference type="InterPro" id="IPR023695">
    <property type="entry name" value="Thiosulf_sulfurTrfase"/>
</dbReference>
<dbReference type="NCBIfam" id="NF001195">
    <property type="entry name" value="PRK00162.1"/>
    <property type="match status" value="1"/>
</dbReference>
<dbReference type="PANTHER" id="PTHR43031">
    <property type="entry name" value="FAD-DEPENDENT OXIDOREDUCTASE"/>
    <property type="match status" value="1"/>
</dbReference>
<dbReference type="PANTHER" id="PTHR43031:SF6">
    <property type="entry name" value="THIOSULFATE SULFURTRANSFERASE GLPE"/>
    <property type="match status" value="1"/>
</dbReference>
<dbReference type="Pfam" id="PF00581">
    <property type="entry name" value="Rhodanese"/>
    <property type="match status" value="1"/>
</dbReference>
<dbReference type="SMART" id="SM00450">
    <property type="entry name" value="RHOD"/>
    <property type="match status" value="1"/>
</dbReference>
<dbReference type="SUPFAM" id="SSF52821">
    <property type="entry name" value="Rhodanese/Cell cycle control phosphatase"/>
    <property type="match status" value="1"/>
</dbReference>
<dbReference type="PROSITE" id="PS50206">
    <property type="entry name" value="RHODANESE_3"/>
    <property type="match status" value="1"/>
</dbReference>
<proteinExistence type="inferred from homology"/>
<sequence length="106" mass="11792">MEQFKHIDVQGAHALISRGEARLVDIRDPQSFAVAHAQSAFHLTNDSIVNFMQQVEFEQPVLVMCYHGISSQGAAQYLVNQGFEEVYSVDGGFEAWHRASLPVEAS</sequence>
<protein>
    <recommendedName>
        <fullName evidence="1">Thiosulfate sulfurtransferase GlpE</fullName>
        <ecNumber evidence="1">2.8.1.1</ecNumber>
    </recommendedName>
</protein>
<name>GLPE_VIBVU</name>
<keyword id="KW-0963">Cytoplasm</keyword>
<keyword id="KW-0808">Transferase</keyword>
<gene>
    <name evidence="1" type="primary">glpE</name>
    <name type="ordered locus">VV1_1160</name>
</gene>
<reference key="1">
    <citation type="submission" date="2002-12" db="EMBL/GenBank/DDBJ databases">
        <title>Complete genome sequence of Vibrio vulnificus CMCP6.</title>
        <authorList>
            <person name="Rhee J.H."/>
            <person name="Kim S.Y."/>
            <person name="Chung S.S."/>
            <person name="Kim J.J."/>
            <person name="Moon Y.H."/>
            <person name="Jeong H."/>
            <person name="Choy H.E."/>
        </authorList>
    </citation>
    <scope>NUCLEOTIDE SEQUENCE [LARGE SCALE GENOMIC DNA]</scope>
    <source>
        <strain>CMCP6</strain>
    </source>
</reference>
<evidence type="ECO:0000255" key="1">
    <source>
        <dbReference type="HAMAP-Rule" id="MF_01009"/>
    </source>
</evidence>